<comment type="function">
    <text evidence="1">Catalyzes the condensation of carbamoyl phosphate and aspartate to form carbamoyl aspartate and inorganic phosphate, the committed step in the de novo pyrimidine nucleotide biosynthesis pathway.</text>
</comment>
<comment type="catalytic activity">
    <reaction evidence="1">
        <text>carbamoyl phosphate + L-aspartate = N-carbamoyl-L-aspartate + phosphate + H(+)</text>
        <dbReference type="Rhea" id="RHEA:20013"/>
        <dbReference type="ChEBI" id="CHEBI:15378"/>
        <dbReference type="ChEBI" id="CHEBI:29991"/>
        <dbReference type="ChEBI" id="CHEBI:32814"/>
        <dbReference type="ChEBI" id="CHEBI:43474"/>
        <dbReference type="ChEBI" id="CHEBI:58228"/>
        <dbReference type="EC" id="2.1.3.2"/>
    </reaction>
</comment>
<comment type="pathway">
    <text evidence="1">Pyrimidine metabolism; UMP biosynthesis via de novo pathway; (S)-dihydroorotate from bicarbonate: step 2/3.</text>
</comment>
<comment type="subunit">
    <text evidence="1">Heterododecamer (2C3:3R2) of six catalytic PyrB chains organized as two trimers (C3), and six regulatory PyrI chains organized as three dimers (R2).</text>
</comment>
<comment type="similarity">
    <text evidence="1">Belongs to the aspartate/ornithine carbamoyltransferase superfamily. ATCase family.</text>
</comment>
<feature type="chain" id="PRO_1000116120" description="Aspartate carbamoyltransferase catalytic subunit">
    <location>
        <begin position="1"/>
        <end position="305"/>
    </location>
</feature>
<feature type="binding site" evidence="1">
    <location>
        <position position="54"/>
    </location>
    <ligand>
        <name>carbamoyl phosphate</name>
        <dbReference type="ChEBI" id="CHEBI:58228"/>
    </ligand>
</feature>
<feature type="binding site" evidence="1">
    <location>
        <position position="55"/>
    </location>
    <ligand>
        <name>carbamoyl phosphate</name>
        <dbReference type="ChEBI" id="CHEBI:58228"/>
    </ligand>
</feature>
<feature type="binding site" evidence="1">
    <location>
        <position position="82"/>
    </location>
    <ligand>
        <name>L-aspartate</name>
        <dbReference type="ChEBI" id="CHEBI:29991"/>
    </ligand>
</feature>
<feature type="binding site" evidence="1">
    <location>
        <position position="104"/>
    </location>
    <ligand>
        <name>carbamoyl phosphate</name>
        <dbReference type="ChEBI" id="CHEBI:58228"/>
    </ligand>
</feature>
<feature type="binding site" evidence="1">
    <location>
        <position position="132"/>
    </location>
    <ligand>
        <name>carbamoyl phosphate</name>
        <dbReference type="ChEBI" id="CHEBI:58228"/>
    </ligand>
</feature>
<feature type="binding site" evidence="1">
    <location>
        <position position="135"/>
    </location>
    <ligand>
        <name>carbamoyl phosphate</name>
        <dbReference type="ChEBI" id="CHEBI:58228"/>
    </ligand>
</feature>
<feature type="binding site" evidence="1">
    <location>
        <position position="165"/>
    </location>
    <ligand>
        <name>L-aspartate</name>
        <dbReference type="ChEBI" id="CHEBI:29991"/>
    </ligand>
</feature>
<feature type="binding site" evidence="1">
    <location>
        <position position="218"/>
    </location>
    <ligand>
        <name>L-aspartate</name>
        <dbReference type="ChEBI" id="CHEBI:29991"/>
    </ligand>
</feature>
<feature type="binding site" evidence="1">
    <location>
        <position position="259"/>
    </location>
    <ligand>
        <name>carbamoyl phosphate</name>
        <dbReference type="ChEBI" id="CHEBI:58228"/>
    </ligand>
</feature>
<feature type="binding site" evidence="1">
    <location>
        <position position="260"/>
    </location>
    <ligand>
        <name>carbamoyl phosphate</name>
        <dbReference type="ChEBI" id="CHEBI:58228"/>
    </ligand>
</feature>
<gene>
    <name evidence="1" type="primary">pyrB</name>
    <name type="ordered locus">Athe_1375</name>
</gene>
<proteinExistence type="inferred from homology"/>
<reference key="1">
    <citation type="submission" date="2009-01" db="EMBL/GenBank/DDBJ databases">
        <title>Complete sequence of chromosome of Caldicellulosiruptor becscii DSM 6725.</title>
        <authorList>
            <person name="Lucas S."/>
            <person name="Copeland A."/>
            <person name="Lapidus A."/>
            <person name="Glavina del Rio T."/>
            <person name="Tice H."/>
            <person name="Bruce D."/>
            <person name="Goodwin L."/>
            <person name="Pitluck S."/>
            <person name="Sims D."/>
            <person name="Meincke L."/>
            <person name="Brettin T."/>
            <person name="Detter J.C."/>
            <person name="Han C."/>
            <person name="Larimer F."/>
            <person name="Land M."/>
            <person name="Hauser L."/>
            <person name="Kyrpides N."/>
            <person name="Ovchinnikova G."/>
            <person name="Kataeva I."/>
            <person name="Adams M.W.W."/>
        </authorList>
    </citation>
    <scope>NUCLEOTIDE SEQUENCE [LARGE SCALE GENOMIC DNA]</scope>
    <source>
        <strain>ATCC BAA-1888 / DSM 6725 / KCTC 15123 / Z-1320</strain>
    </source>
</reference>
<sequence length="305" mass="34265">MKHLLGLRELSKEDIIKILNLAKDMKTILKSETKKTPHLQGYSVVTLFYENSTRTRTSFELAAKFMSANTTSISVQTSSVQKGESLLDTVKTLEALKTDVLIVRHAVSGVPHFIAKNCSFSVINAGDGMNEHPTQALLDMFTIRERLGTIERLKIAIIGDIFHSRVARSNIWGLSKFDNQITVFGPQTLIPPYIENFAYVASSLEEAVSGKDVVIDLRIQLERQKRGFITSKQEYYKFYGLNEDIMRYISGSTLIMHPGPVNRGVEISSEVLQLPNSTIDEQVTNGIAVRMAVLYLCTRKEGIYR</sequence>
<protein>
    <recommendedName>
        <fullName evidence="1">Aspartate carbamoyltransferase catalytic subunit</fullName>
        <ecNumber evidence="1">2.1.3.2</ecNumber>
    </recommendedName>
    <alternativeName>
        <fullName evidence="1">Aspartate transcarbamylase</fullName>
        <shortName evidence="1">ATCase</shortName>
    </alternativeName>
</protein>
<organism>
    <name type="scientific">Caldicellulosiruptor bescii (strain ATCC BAA-1888 / DSM 6725 / KCTC 15123 / Z-1320)</name>
    <name type="common">Anaerocellum thermophilum</name>
    <dbReference type="NCBI Taxonomy" id="521460"/>
    <lineage>
        <taxon>Bacteria</taxon>
        <taxon>Bacillati</taxon>
        <taxon>Bacillota</taxon>
        <taxon>Bacillota incertae sedis</taxon>
        <taxon>Caldicellulosiruptorales</taxon>
        <taxon>Caldicellulosiruptoraceae</taxon>
        <taxon>Caldicellulosiruptor</taxon>
    </lineage>
</organism>
<name>PYRB_CALBD</name>
<evidence type="ECO:0000255" key="1">
    <source>
        <dbReference type="HAMAP-Rule" id="MF_00001"/>
    </source>
</evidence>
<accession>B9MS21</accession>
<keyword id="KW-0665">Pyrimidine biosynthesis</keyword>
<keyword id="KW-0808">Transferase</keyword>
<dbReference type="EC" id="2.1.3.2" evidence="1"/>
<dbReference type="EMBL" id="CP001393">
    <property type="protein sequence ID" value="ACM60475.1"/>
    <property type="molecule type" value="Genomic_DNA"/>
</dbReference>
<dbReference type="RefSeq" id="WP_015907844.1">
    <property type="nucleotide sequence ID" value="NC_012034.1"/>
</dbReference>
<dbReference type="SMR" id="B9MS21"/>
<dbReference type="STRING" id="521460.Athe_1375"/>
<dbReference type="GeneID" id="31772722"/>
<dbReference type="KEGG" id="ate:Athe_1375"/>
<dbReference type="eggNOG" id="COG0540">
    <property type="taxonomic scope" value="Bacteria"/>
</dbReference>
<dbReference type="HOGENOM" id="CLU_043846_2_0_9"/>
<dbReference type="UniPathway" id="UPA00070">
    <property type="reaction ID" value="UER00116"/>
</dbReference>
<dbReference type="Proteomes" id="UP000007723">
    <property type="component" value="Chromosome"/>
</dbReference>
<dbReference type="GO" id="GO:0005829">
    <property type="term" value="C:cytosol"/>
    <property type="evidence" value="ECO:0007669"/>
    <property type="project" value="TreeGrafter"/>
</dbReference>
<dbReference type="GO" id="GO:0016597">
    <property type="term" value="F:amino acid binding"/>
    <property type="evidence" value="ECO:0007669"/>
    <property type="project" value="InterPro"/>
</dbReference>
<dbReference type="GO" id="GO:0004070">
    <property type="term" value="F:aspartate carbamoyltransferase activity"/>
    <property type="evidence" value="ECO:0007669"/>
    <property type="project" value="UniProtKB-UniRule"/>
</dbReference>
<dbReference type="GO" id="GO:0006207">
    <property type="term" value="P:'de novo' pyrimidine nucleobase biosynthetic process"/>
    <property type="evidence" value="ECO:0007669"/>
    <property type="project" value="InterPro"/>
</dbReference>
<dbReference type="GO" id="GO:0044205">
    <property type="term" value="P:'de novo' UMP biosynthetic process"/>
    <property type="evidence" value="ECO:0007669"/>
    <property type="project" value="UniProtKB-UniRule"/>
</dbReference>
<dbReference type="GO" id="GO:0006520">
    <property type="term" value="P:amino acid metabolic process"/>
    <property type="evidence" value="ECO:0007669"/>
    <property type="project" value="InterPro"/>
</dbReference>
<dbReference type="Gene3D" id="3.40.50.1370">
    <property type="entry name" value="Aspartate/ornithine carbamoyltransferase"/>
    <property type="match status" value="2"/>
</dbReference>
<dbReference type="HAMAP" id="MF_00001">
    <property type="entry name" value="Asp_carb_tr"/>
    <property type="match status" value="1"/>
</dbReference>
<dbReference type="InterPro" id="IPR006132">
    <property type="entry name" value="Asp/Orn_carbamoyltranf_P-bd"/>
</dbReference>
<dbReference type="InterPro" id="IPR006130">
    <property type="entry name" value="Asp/Orn_carbamoylTrfase"/>
</dbReference>
<dbReference type="InterPro" id="IPR036901">
    <property type="entry name" value="Asp/Orn_carbamoylTrfase_sf"/>
</dbReference>
<dbReference type="InterPro" id="IPR002082">
    <property type="entry name" value="Asp_carbamoyltransf"/>
</dbReference>
<dbReference type="InterPro" id="IPR006131">
    <property type="entry name" value="Asp_carbamoyltransf_Asp/Orn-bd"/>
</dbReference>
<dbReference type="NCBIfam" id="TIGR00670">
    <property type="entry name" value="asp_carb_tr"/>
    <property type="match status" value="1"/>
</dbReference>
<dbReference type="NCBIfam" id="NF002032">
    <property type="entry name" value="PRK00856.1"/>
    <property type="match status" value="1"/>
</dbReference>
<dbReference type="PANTHER" id="PTHR45753:SF6">
    <property type="entry name" value="ASPARTATE CARBAMOYLTRANSFERASE"/>
    <property type="match status" value="1"/>
</dbReference>
<dbReference type="PANTHER" id="PTHR45753">
    <property type="entry name" value="ORNITHINE CARBAMOYLTRANSFERASE, MITOCHONDRIAL"/>
    <property type="match status" value="1"/>
</dbReference>
<dbReference type="Pfam" id="PF00185">
    <property type="entry name" value="OTCace"/>
    <property type="match status" value="1"/>
</dbReference>
<dbReference type="Pfam" id="PF02729">
    <property type="entry name" value="OTCace_N"/>
    <property type="match status" value="1"/>
</dbReference>
<dbReference type="PRINTS" id="PR00100">
    <property type="entry name" value="AOTCASE"/>
</dbReference>
<dbReference type="PRINTS" id="PR00101">
    <property type="entry name" value="ATCASE"/>
</dbReference>
<dbReference type="SUPFAM" id="SSF53671">
    <property type="entry name" value="Aspartate/ornithine carbamoyltransferase"/>
    <property type="match status" value="1"/>
</dbReference>
<dbReference type="PROSITE" id="PS00097">
    <property type="entry name" value="CARBAMOYLTRANSFERASE"/>
    <property type="match status" value="1"/>
</dbReference>